<protein>
    <recommendedName>
        <fullName evidence="1">Capsid vertex component 2</fullName>
    </recommendedName>
</protein>
<gene>
    <name evidence="1" type="primary">CVC2</name>
    <name type="ordered locus">UL25</name>
</gene>
<accession>P10209</accession>
<evidence type="ECO:0000255" key="1">
    <source>
        <dbReference type="HAMAP-Rule" id="MF_04025"/>
    </source>
</evidence>
<evidence type="ECO:0000256" key="2">
    <source>
        <dbReference type="SAM" id="MobiDB-lite"/>
    </source>
</evidence>
<evidence type="ECO:0000269" key="3">
    <source>
    </source>
</evidence>
<evidence type="ECO:0000269" key="4">
    <source>
    </source>
</evidence>
<evidence type="ECO:0000269" key="5">
    <source>
    </source>
</evidence>
<evidence type="ECO:0000269" key="6">
    <source>
    </source>
</evidence>
<evidence type="ECO:0000269" key="7">
    <source>
    </source>
</evidence>
<evidence type="ECO:0000269" key="8">
    <source>
    </source>
</evidence>
<evidence type="ECO:0000269" key="9">
    <source>
    </source>
</evidence>
<evidence type="ECO:0000269" key="10">
    <source>
    </source>
</evidence>
<evidence type="ECO:0007829" key="11">
    <source>
        <dbReference type="PDB" id="2F5U"/>
    </source>
</evidence>
<name>CVC2_HHV11</name>
<organism>
    <name type="scientific">Human herpesvirus 1 (strain 17)</name>
    <name type="common">HHV-1</name>
    <name type="synonym">Human herpes simplex virus 1</name>
    <dbReference type="NCBI Taxonomy" id="10299"/>
    <lineage>
        <taxon>Viruses</taxon>
        <taxon>Duplodnaviria</taxon>
        <taxon>Heunggongvirae</taxon>
        <taxon>Peploviricota</taxon>
        <taxon>Herviviricetes</taxon>
        <taxon>Herpesvirales</taxon>
        <taxon>Orthoherpesviridae</taxon>
        <taxon>Alphaherpesvirinae</taxon>
        <taxon>Simplexvirus</taxon>
        <taxon>Simplexvirus humanalpha1</taxon>
        <taxon>Human herpesvirus 1</taxon>
    </lineage>
</organism>
<organismHost>
    <name type="scientific">Homo sapiens</name>
    <name type="common">Human</name>
    <dbReference type="NCBI Taxonomy" id="9606"/>
</organismHost>
<dbReference type="EMBL" id="X14112">
    <property type="protein sequence ID" value="CAA32317.1"/>
    <property type="molecule type" value="Genomic_DNA"/>
</dbReference>
<dbReference type="PIR" id="G30084">
    <property type="entry name" value="WMBEW5"/>
</dbReference>
<dbReference type="RefSeq" id="YP_009137099.1">
    <property type="nucleotide sequence ID" value="NC_001806.2"/>
</dbReference>
<dbReference type="PDB" id="2F5U">
    <property type="method" value="X-ray"/>
    <property type="resolution" value="2.10 A"/>
    <property type="chains" value="A=134-580"/>
</dbReference>
<dbReference type="PDB" id="8XA0">
    <property type="method" value="EM"/>
    <property type="resolution" value="4.00 A"/>
    <property type="chains" value="q/u=1-94"/>
</dbReference>
<dbReference type="PDBsum" id="2F5U"/>
<dbReference type="PDBsum" id="8XA0"/>
<dbReference type="EMDB" id="EMD-38190"/>
<dbReference type="SMR" id="P10209"/>
<dbReference type="BioGRID" id="971417">
    <property type="interactions" value="2"/>
</dbReference>
<dbReference type="DIP" id="DIP-60387N"/>
<dbReference type="IntAct" id="P10209">
    <property type="interactions" value="9"/>
</dbReference>
<dbReference type="DNASU" id="2703377"/>
<dbReference type="GeneID" id="2703377"/>
<dbReference type="KEGG" id="vg:2703377"/>
<dbReference type="EvolutionaryTrace" id="P10209"/>
<dbReference type="Proteomes" id="UP000009294">
    <property type="component" value="Segment"/>
</dbReference>
<dbReference type="GO" id="GO:0043657">
    <property type="term" value="C:host cell"/>
    <property type="evidence" value="ECO:0007669"/>
    <property type="project" value="GOC"/>
</dbReference>
<dbReference type="GO" id="GO:0042025">
    <property type="term" value="C:host cell nucleus"/>
    <property type="evidence" value="ECO:0007669"/>
    <property type="project" value="UniProtKB-SubCell"/>
</dbReference>
<dbReference type="GO" id="GO:0019028">
    <property type="term" value="C:viral capsid"/>
    <property type="evidence" value="ECO:0007669"/>
    <property type="project" value="UniProtKB-KW"/>
</dbReference>
<dbReference type="GO" id="GO:0046718">
    <property type="term" value="P:symbiont entry into host cell"/>
    <property type="evidence" value="ECO:0007669"/>
    <property type="project" value="UniProtKB-KW"/>
</dbReference>
<dbReference type="GO" id="GO:0019072">
    <property type="term" value="P:viral genome packaging"/>
    <property type="evidence" value="ECO:0007669"/>
    <property type="project" value="InterPro"/>
</dbReference>
<dbReference type="GO" id="GO:0075732">
    <property type="term" value="P:viral penetration into host nucleus"/>
    <property type="evidence" value="ECO:0007669"/>
    <property type="project" value="UniProtKB-KW"/>
</dbReference>
<dbReference type="HAMAP" id="MF_04025">
    <property type="entry name" value="HSV_CVC2"/>
    <property type="match status" value="1"/>
</dbReference>
<dbReference type="InterPro" id="IPR002493">
    <property type="entry name" value="Herpes_UL25"/>
</dbReference>
<dbReference type="Pfam" id="PF01499">
    <property type="entry name" value="Herpes_UL25"/>
    <property type="match status" value="1"/>
</dbReference>
<comment type="function">
    <text evidence="1 7 8">Capsid vertex-specific component that plays a role during viral DNA encapsidation, assuring correct genome cleavage and presumably stabilizing capsids that contain full-length viral genomes. Participates in the interaction between the capsid and the tegument through interaction with the large tegument protein/LTP. May mediate the capsid docking to the nuclear pore allowing entry of the viral genome into the host nucleus through binding to host nucleoporins NUP214.</text>
</comment>
<comment type="subunit">
    <text evidence="1 3 5 6 9 10">Heterodimerizes with CVC1. Interacts with major capsid protein/MCP and triplex capsid protein 1/TRX1 at the pentamer vertices. Interacts with the large tegument protein/LTP. Interacts with host NUP214; this interaction might be essential to the capsid docking to the host nuclear pore. Interacts with host TMEM250.</text>
</comment>
<comment type="subcellular location">
    <subcellularLocation>
        <location evidence="1 4">Virion</location>
    </subcellularLocation>
    <subcellularLocation>
        <location evidence="1 4">Host nucleus</location>
    </subcellularLocation>
</comment>
<comment type="similarity">
    <text evidence="1">Belongs to the herpesviridae CVC2 protein family.</text>
</comment>
<keyword id="KW-0002">3D-structure</keyword>
<keyword id="KW-0167">Capsid protein</keyword>
<keyword id="KW-1048">Host nucleus</keyword>
<keyword id="KW-0945">Host-virus interaction</keyword>
<keyword id="KW-1185">Reference proteome</keyword>
<keyword id="KW-0231">Viral genome packaging</keyword>
<keyword id="KW-1163">Viral penetration into host nucleus</keyword>
<keyword id="KW-1188">Viral release from host cell</keyword>
<keyword id="KW-0946">Virion</keyword>
<keyword id="KW-1160">Virus entry into host cell</keyword>
<feature type="chain" id="PRO_0000115993" description="Capsid vertex component 2">
    <location>
        <begin position="1"/>
        <end position="580"/>
    </location>
</feature>
<feature type="region of interest" description="Interaction with major capsid protein/MCP">
    <location>
        <begin position="1"/>
        <end position="50"/>
    </location>
</feature>
<feature type="region of interest" description="Interaction with major capsid protein/MCP" evidence="1">
    <location>
        <begin position="1"/>
        <end position="49"/>
    </location>
</feature>
<feature type="region of interest" description="Disordered" evidence="2">
    <location>
        <begin position="108"/>
        <end position="129"/>
    </location>
</feature>
<feature type="compositionally biased region" description="Gly residues" evidence="2">
    <location>
        <begin position="119"/>
        <end position="128"/>
    </location>
</feature>
<feature type="strand" evidence="11">
    <location>
        <begin position="136"/>
        <end position="138"/>
    </location>
</feature>
<feature type="strand" evidence="11">
    <location>
        <begin position="147"/>
        <end position="151"/>
    </location>
</feature>
<feature type="helix" evidence="11">
    <location>
        <begin position="153"/>
        <end position="163"/>
    </location>
</feature>
<feature type="helix" evidence="11">
    <location>
        <begin position="165"/>
        <end position="167"/>
    </location>
</feature>
<feature type="strand" evidence="11">
    <location>
        <begin position="168"/>
        <end position="170"/>
    </location>
</feature>
<feature type="helix" evidence="11">
    <location>
        <begin position="177"/>
        <end position="189"/>
    </location>
</feature>
<feature type="helix" evidence="11">
    <location>
        <begin position="191"/>
        <end position="195"/>
    </location>
</feature>
<feature type="helix" evidence="11">
    <location>
        <begin position="200"/>
        <end position="202"/>
    </location>
</feature>
<feature type="helix" evidence="11">
    <location>
        <begin position="206"/>
        <end position="218"/>
    </location>
</feature>
<feature type="helix" evidence="11">
    <location>
        <begin position="231"/>
        <end position="246"/>
    </location>
</feature>
<feature type="helix" evidence="11">
    <location>
        <begin position="260"/>
        <end position="265"/>
    </location>
</feature>
<feature type="helix" evidence="11">
    <location>
        <begin position="267"/>
        <end position="278"/>
    </location>
</feature>
<feature type="helix" evidence="11">
    <location>
        <begin position="291"/>
        <end position="293"/>
    </location>
</feature>
<feature type="turn" evidence="11">
    <location>
        <begin position="308"/>
        <end position="313"/>
    </location>
</feature>
<feature type="helix" evidence="11">
    <location>
        <begin position="315"/>
        <end position="322"/>
    </location>
</feature>
<feature type="helix" evidence="11">
    <location>
        <begin position="351"/>
        <end position="360"/>
    </location>
</feature>
<feature type="helix" evidence="11">
    <location>
        <begin position="368"/>
        <end position="370"/>
    </location>
</feature>
<feature type="helix" evidence="11">
    <location>
        <begin position="372"/>
        <end position="392"/>
    </location>
</feature>
<feature type="helix" evidence="11">
    <location>
        <begin position="401"/>
        <end position="403"/>
    </location>
</feature>
<feature type="helix" evidence="11">
    <location>
        <begin position="408"/>
        <end position="411"/>
    </location>
</feature>
<feature type="helix" evidence="11">
    <location>
        <begin position="438"/>
        <end position="446"/>
    </location>
</feature>
<feature type="helix" evidence="11">
    <location>
        <begin position="448"/>
        <end position="454"/>
    </location>
</feature>
<feature type="helix" evidence="11">
    <location>
        <begin position="460"/>
        <end position="463"/>
    </location>
</feature>
<feature type="helix" evidence="11">
    <location>
        <begin position="465"/>
        <end position="474"/>
    </location>
</feature>
<feature type="helix" evidence="11">
    <location>
        <begin position="491"/>
        <end position="494"/>
    </location>
</feature>
<feature type="helix" evidence="11">
    <location>
        <begin position="496"/>
        <end position="508"/>
    </location>
</feature>
<feature type="helix" evidence="11">
    <location>
        <begin position="517"/>
        <end position="540"/>
    </location>
</feature>
<feature type="helix" evidence="11">
    <location>
        <begin position="547"/>
        <end position="549"/>
    </location>
</feature>
<feature type="helix" evidence="11">
    <location>
        <begin position="550"/>
        <end position="554"/>
    </location>
</feature>
<feature type="turn" evidence="11">
    <location>
        <begin position="555"/>
        <end position="557"/>
    </location>
</feature>
<feature type="helix" evidence="11">
    <location>
        <begin position="561"/>
        <end position="570"/>
    </location>
</feature>
<sequence>MDPYCPFDALDVWEHRRFIVADSRNFITPEFPRDFWMSPVFNLPRETAAEQVVVLQAQRTAAAAALENAAMQAAELPVDIERRLRPIERNVHEIAGALEALETAAAAAEEADAARGDEPAGGGDGGAPPGLAVAEMEVQIVRNDPPLRYDTNLPVDLLHMVYAGRGATGSSGVVFGTWYRTIQDRTITDFPLTTRSADFRDGRMSKTFMTALVLSLQACGRLYVGQRHYSAFECAVLCLYLLYRNTHGAADDSDRAPVTFGDLLGRLPRYLACLAAVIGTEGGRPQYRYRDDKLPKTQFAAGGGRYEHGALASHIVIATLMHHGVLPAAPGDVPRDASTHVNPDGVAHHDDINRAAAAFLSRGHNLFLWEDQTLLRATANTITALGVIQRLLANGNVYADRLNNRLQLGMLIPGAVPSEAIARGASGSDSGAIKSGDNNLEALCANYVLPLYRADPAVELTQLFPGLAALCLDAQAGRPVGSTRRVVDMSSGARQAALVRLTALELINRTRTNPTPVGEVIHAHDALAIQYEQGLGLLAQQARIGLGSNTKRFSAFNVSSDYDMLYFLCLGFIPQYLSAV</sequence>
<reference key="1">
    <citation type="journal article" date="1988" name="J. Gen. Virol.">
        <title>The complete DNA sequence of the long unique region in the genome of herpes simplex virus type 1.</title>
        <authorList>
            <person name="McGeoch D.J."/>
            <person name="Dalrymple M.A."/>
            <person name="Davison A.J."/>
            <person name="Dolan A."/>
            <person name="Frame M.C."/>
            <person name="McNab D."/>
            <person name="Perry L.J."/>
            <person name="Scott J.E."/>
            <person name="Taylor P."/>
        </authorList>
    </citation>
    <scope>NUCLEOTIDE SEQUENCE [GENOMIC DNA]</scope>
</reference>
<reference key="2">
    <citation type="journal article" date="2001" name="J. Virol.">
        <title>Role of the UL25 gene product in packaging DNA into the herpes simplex virus capsid: location of UL25 product in the capsid and demonstration that it binds DNA.</title>
        <authorList>
            <person name="Ogasawara M."/>
            <person name="Suzutani T."/>
            <person name="Yoshida I."/>
            <person name="Azuma M."/>
        </authorList>
    </citation>
    <scope>INTERACTION WITH VP5 AND VP19C</scope>
</reference>
<reference key="3">
    <citation type="journal article" date="2006" name="J. Virol.">
        <title>Herpes simplex virus capsid structure: DNA packaging protein UL25 is located on the external surface of the capsid near the vertices.</title>
        <authorList>
            <person name="Newcomb W.W."/>
            <person name="Homa F.L."/>
            <person name="Brown J.C."/>
        </authorList>
    </citation>
    <scope>SUBCELLULAR LOCATION</scope>
</reference>
<reference key="4">
    <citation type="journal article" date="2007" name="Mol. Cell">
        <title>Allosteric signaling and a nuclear exit strategy: binding of UL25/UL17 heterodimers to DNA-Filled HSV-1 capsids.</title>
        <authorList>
            <person name="Trus B.L."/>
            <person name="Newcomb W.W."/>
            <person name="Cheng N."/>
            <person name="Cardone G."/>
            <person name="Marekov L."/>
            <person name="Homa F.L."/>
            <person name="Brown J.C."/>
            <person name="Steven A.C."/>
        </authorList>
    </citation>
    <scope>INTERACTION WITH UL17</scope>
</reference>
<reference key="5">
    <citation type="journal article" date="2007" name="J. Virol.">
        <title>The capsid and tegument of the alphaherpesviruses are linked by an interaction between the UL25 and VP1/2 proteins.</title>
        <authorList>
            <person name="Coller K.E."/>
            <person name="Lee J.I."/>
            <person name="Ueda A."/>
            <person name="Smith G.A."/>
        </authorList>
    </citation>
    <scope>INTERACTION WITH UL36</scope>
</reference>
<reference key="6">
    <citation type="journal article" date="2008" name="J. Virol.">
        <title>The UL25 gene product of herpes simplex virus type 1 is involved in uncoating of the viral genome.</title>
        <authorList>
            <person name="Preston V.G."/>
            <person name="Murray J."/>
            <person name="Preston C.M."/>
            <person name="McDougall I.M."/>
            <person name="Stow N.D."/>
        </authorList>
    </citation>
    <scope>FUNCTION</scope>
</reference>
<reference key="7">
    <citation type="journal article" date="2009" name="J. Virol.">
        <title>Role of the UL25 protein in herpes simplex virus DNA encapsidation.</title>
        <authorList>
            <person name="Cockrell S.K."/>
            <person name="Sanchez M.E."/>
            <person name="Erazo A."/>
            <person name="Homa F.L."/>
        </authorList>
    </citation>
    <scope>FUNCTION</scope>
</reference>
<reference key="8">
    <citation type="journal article" date="2009" name="J. Virol.">
        <title>Herpesvirus capsid association with the nuclear pore complex and viral DNA release involve the nucleoporin CAN/Nup214 and the capsid protein pUL25.</title>
        <authorList>
            <person name="Pasdeloup D."/>
            <person name="Blondel D."/>
            <person name="Isidro A.L."/>
            <person name="Rixon F.J."/>
        </authorList>
    </citation>
    <scope>INTERACTION WITH HUMAN NUP214</scope>
</reference>
<reference key="9">
    <citation type="journal article" date="2011" name="Zhongguo Bing Du Xue">
        <title>Host cell protein C9orf69 promotes viral proliferation via interaction with HSV-1 UL25 protein.</title>
        <authorList>
            <person name="Zhang Y."/>
            <person name="Li Y.M."/>
            <person name="Liu L.D."/>
            <person name="Jiang L."/>
            <person name="Ji M."/>
            <person name="Jiang R.J."/>
            <person name="Guo L."/>
            <person name="Liao Y."/>
            <person name="Li Q.H."/>
        </authorList>
    </citation>
    <scope>INTERACTION WITH HUMAN TMEM250</scope>
</reference>
<reference key="10">
    <citation type="journal article" date="2006" name="J. Virol.">
        <title>Structural characterization of the UL25 DNA-packaging protein from herpes simplex virus type 1.</title>
        <authorList>
            <person name="Bowman B.R."/>
            <person name="Welschhans R.L."/>
            <person name="Jayaram H."/>
            <person name="Stow N.D."/>
            <person name="Preston V.G."/>
            <person name="Quiocho F.A."/>
        </authorList>
    </citation>
    <scope>X-RAY CRYSTALLOGRAPHY (2.1 ANGSTROMS) OF 134-580</scope>
</reference>
<proteinExistence type="evidence at protein level"/>